<feature type="chain" id="PRO_0000383719" description="Cytosolic Fe-S cluster assembly factor nar1">
    <location>
        <begin position="1"/>
        <end position="599"/>
    </location>
</feature>
<feature type="binding site" evidence="2">
    <location>
        <position position="20"/>
    </location>
    <ligand>
        <name>[4Fe-4S] cluster</name>
        <dbReference type="ChEBI" id="CHEBI:49883"/>
        <label>1</label>
    </ligand>
</feature>
<feature type="binding site" evidence="2">
    <location>
        <position position="62"/>
    </location>
    <ligand>
        <name>[4Fe-4S] cluster</name>
        <dbReference type="ChEBI" id="CHEBI:49883"/>
        <label>1</label>
    </ligand>
</feature>
<feature type="binding site" evidence="2">
    <location>
        <position position="65"/>
    </location>
    <ligand>
        <name>[4Fe-4S] cluster</name>
        <dbReference type="ChEBI" id="CHEBI:49883"/>
        <label>1</label>
    </ligand>
</feature>
<feature type="binding site" evidence="2">
    <location>
        <position position="68"/>
    </location>
    <ligand>
        <name>[4Fe-4S] cluster</name>
        <dbReference type="ChEBI" id="CHEBI:49883"/>
        <label>1</label>
    </ligand>
</feature>
<feature type="binding site" evidence="2">
    <location>
        <position position="210"/>
    </location>
    <ligand>
        <name>[4Fe-4S] cluster</name>
        <dbReference type="ChEBI" id="CHEBI:49883"/>
        <label>2</label>
    </ligand>
</feature>
<feature type="binding site" evidence="2">
    <location>
        <position position="265"/>
    </location>
    <ligand>
        <name>[4Fe-4S] cluster</name>
        <dbReference type="ChEBI" id="CHEBI:49883"/>
        <label>2</label>
    </ligand>
</feature>
<feature type="binding site" evidence="2">
    <location>
        <position position="468"/>
    </location>
    <ligand>
        <name>[4Fe-4S] cluster</name>
        <dbReference type="ChEBI" id="CHEBI:49883"/>
        <label>2</label>
    </ligand>
</feature>
<feature type="binding site" evidence="2">
    <location>
        <position position="472"/>
    </location>
    <ligand>
        <name>[4Fe-4S] cluster</name>
        <dbReference type="ChEBI" id="CHEBI:49883"/>
        <label>2</label>
    </ligand>
</feature>
<protein>
    <recommendedName>
        <fullName>Cytosolic Fe-S cluster assembly factor nar1</fullName>
    </recommendedName>
    <alternativeName>
        <fullName>Nuclear architecture-related protein 1</fullName>
    </alternativeName>
</protein>
<accession>Q0CR17</accession>
<keyword id="KW-0004">4Fe-4S</keyword>
<keyword id="KW-0408">Iron</keyword>
<keyword id="KW-0411">Iron-sulfur</keyword>
<keyword id="KW-0479">Metal-binding</keyword>
<keyword id="KW-1185">Reference proteome</keyword>
<proteinExistence type="inferred from homology"/>
<reference key="1">
    <citation type="submission" date="2005-09" db="EMBL/GenBank/DDBJ databases">
        <title>Annotation of the Aspergillus terreus NIH2624 genome.</title>
        <authorList>
            <person name="Birren B.W."/>
            <person name="Lander E.S."/>
            <person name="Galagan J.E."/>
            <person name="Nusbaum C."/>
            <person name="Devon K."/>
            <person name="Henn M."/>
            <person name="Ma L.-J."/>
            <person name="Jaffe D.B."/>
            <person name="Butler J."/>
            <person name="Alvarez P."/>
            <person name="Gnerre S."/>
            <person name="Grabherr M."/>
            <person name="Kleber M."/>
            <person name="Mauceli E.W."/>
            <person name="Brockman W."/>
            <person name="Rounsley S."/>
            <person name="Young S.K."/>
            <person name="LaButti K."/>
            <person name="Pushparaj V."/>
            <person name="DeCaprio D."/>
            <person name="Crawford M."/>
            <person name="Koehrsen M."/>
            <person name="Engels R."/>
            <person name="Montgomery P."/>
            <person name="Pearson M."/>
            <person name="Howarth C."/>
            <person name="Larson L."/>
            <person name="Luoma S."/>
            <person name="White J."/>
            <person name="Alvarado L."/>
            <person name="Kodira C.D."/>
            <person name="Zeng Q."/>
            <person name="Oleary S."/>
            <person name="Yandava C."/>
            <person name="Denning D.W."/>
            <person name="Nierman W.C."/>
            <person name="Milne T."/>
            <person name="Madden K."/>
        </authorList>
    </citation>
    <scope>NUCLEOTIDE SEQUENCE [LARGE SCALE GENOMIC DNA]</scope>
    <source>
        <strain>NIH 2624 / FGSC A1156</strain>
    </source>
</reference>
<gene>
    <name type="primary">nar1</name>
    <name type="ORF">ATEG_03867</name>
</gene>
<sequence length="599" mass="64611">MSAILSADDLNDFISPGVACIKPIESLPSKQPQKSDNPYEVTTEDKVQAENPTPAQISLTDCLACSGCVTSAEAVLISLQSHTEVLNTLDAHPELRLIQNEQGTSLDPRSAQDDEGRIFVASVSPQVRASLAATYGVSEKEATSIIHQLLSGPHGLRAGGKHGSGFTWVIDTNIMREAVLVLTADEVSDTLASEAKDPSLPKKPIVSSACPGWVCYAEKTHPFILPHLSKLKSPQALAGTLLKSTLSKTLGVPVSRIWHLAVMPCFDKKLEASREELTDVTWNPADGQMFSQPQTPVRDVDCVITTRELLTLASARGISLPSILSKSSSVSFPSFPDKALDDYLFSKRSLSAQSMMTGTSGGYLHHVLTSFQARNPGSEIVAERGRNADVVVYKLVSPENGSIIEAARYYGFRNIQNLVNKLKPPEMSKLSGARRNDALGGKARMQLSSRKAAAKTKFDYAYVEVMACPGGCTNGGGQIRIEDAREANLTAQTGTPADTNGAASKPSPHEQRAWLARVDEAYFSAGDSEDETEASSKHFSILEREAGIHQILHYWSDLMGVPLSKLAYTTFREVESDVGKPQEGVNATAQAALREGTNW</sequence>
<comment type="function">
    <text evidence="1">Component of the cytosolic Fe/S protein assembly machinery. Required for maturation of extramitochondrial Fe/S proteins. May play a role in the transfer of pre-assembled Fe/S clusters to target apoproteins (By similarity).</text>
</comment>
<comment type="similarity">
    <text evidence="3">Belongs to the NARF family.</text>
</comment>
<organism>
    <name type="scientific">Aspergillus terreus (strain NIH 2624 / FGSC A1156)</name>
    <dbReference type="NCBI Taxonomy" id="341663"/>
    <lineage>
        <taxon>Eukaryota</taxon>
        <taxon>Fungi</taxon>
        <taxon>Dikarya</taxon>
        <taxon>Ascomycota</taxon>
        <taxon>Pezizomycotina</taxon>
        <taxon>Eurotiomycetes</taxon>
        <taxon>Eurotiomycetidae</taxon>
        <taxon>Eurotiales</taxon>
        <taxon>Aspergillaceae</taxon>
        <taxon>Aspergillus</taxon>
        <taxon>Aspergillus subgen. Circumdati</taxon>
    </lineage>
</organism>
<name>NAR1_ASPTN</name>
<dbReference type="EMBL" id="CH476598">
    <property type="protein sequence ID" value="EAU35669.1"/>
    <property type="molecule type" value="Genomic_DNA"/>
</dbReference>
<dbReference type="RefSeq" id="XP_001213045.1">
    <property type="nucleotide sequence ID" value="XM_001213045.1"/>
</dbReference>
<dbReference type="SMR" id="Q0CR17"/>
<dbReference type="STRING" id="341663.Q0CR17"/>
<dbReference type="EnsemblFungi" id="EAU35669">
    <property type="protein sequence ID" value="EAU35669"/>
    <property type="gene ID" value="ATEG_03867"/>
</dbReference>
<dbReference type="GeneID" id="4318387"/>
<dbReference type="VEuPathDB" id="FungiDB:ATEG_03867"/>
<dbReference type="eggNOG" id="KOG2439">
    <property type="taxonomic scope" value="Eukaryota"/>
</dbReference>
<dbReference type="HOGENOM" id="CLU_018240_0_1_1"/>
<dbReference type="OMA" id="GYLHHVL"/>
<dbReference type="OrthoDB" id="10253113at2759"/>
<dbReference type="Proteomes" id="UP000007963">
    <property type="component" value="Unassembled WGS sequence"/>
</dbReference>
<dbReference type="GO" id="GO:0051539">
    <property type="term" value="F:4 iron, 4 sulfur cluster binding"/>
    <property type="evidence" value="ECO:0007669"/>
    <property type="project" value="UniProtKB-KW"/>
</dbReference>
<dbReference type="GO" id="GO:0051536">
    <property type="term" value="F:iron-sulfur cluster binding"/>
    <property type="evidence" value="ECO:0000250"/>
    <property type="project" value="UniProtKB"/>
</dbReference>
<dbReference type="GO" id="GO:0046872">
    <property type="term" value="F:metal ion binding"/>
    <property type="evidence" value="ECO:0007669"/>
    <property type="project" value="UniProtKB-KW"/>
</dbReference>
<dbReference type="GO" id="GO:0016226">
    <property type="term" value="P:iron-sulfur cluster assembly"/>
    <property type="evidence" value="ECO:0000250"/>
    <property type="project" value="UniProtKB"/>
</dbReference>
<dbReference type="Gene3D" id="3.40.50.1780">
    <property type="match status" value="2"/>
</dbReference>
<dbReference type="Gene3D" id="3.40.950.10">
    <property type="entry name" value="Fe-only Hydrogenase (Larger Subunit), Chain L, domain 3"/>
    <property type="match status" value="2"/>
</dbReference>
<dbReference type="InterPro" id="IPR050340">
    <property type="entry name" value="Cytosolic_Fe-S_CAF"/>
</dbReference>
<dbReference type="InterPro" id="IPR009016">
    <property type="entry name" value="Fe_hydrogenase"/>
</dbReference>
<dbReference type="InterPro" id="IPR004108">
    <property type="entry name" value="Fe_hydrogenase_lsu_C"/>
</dbReference>
<dbReference type="PANTHER" id="PTHR11615">
    <property type="entry name" value="NITRATE, FORMATE, IRON DEHYDROGENASE"/>
    <property type="match status" value="1"/>
</dbReference>
<dbReference type="Pfam" id="PF02906">
    <property type="entry name" value="Fe_hyd_lg_C"/>
    <property type="match status" value="1"/>
</dbReference>
<dbReference type="SUPFAM" id="SSF53920">
    <property type="entry name" value="Fe-only hydrogenase"/>
    <property type="match status" value="1"/>
</dbReference>
<evidence type="ECO:0000250" key="1"/>
<evidence type="ECO:0000255" key="2"/>
<evidence type="ECO:0000305" key="3"/>